<feature type="chain" id="PRO_1000072864" description="ATP synthase gamma chain">
    <location>
        <begin position="1"/>
        <end position="288"/>
    </location>
</feature>
<reference key="1">
    <citation type="journal article" date="2008" name="J. Bacteriol.">
        <title>Genome sequence of Staphylococcus aureus strain Newman and comparative analysis of staphylococcal genomes: polymorphism and evolution of two major pathogenicity islands.</title>
        <authorList>
            <person name="Baba T."/>
            <person name="Bae T."/>
            <person name="Schneewind O."/>
            <person name="Takeuchi F."/>
            <person name="Hiramatsu K."/>
        </authorList>
    </citation>
    <scope>NUCLEOTIDE SEQUENCE [LARGE SCALE GENOMIC DNA]</scope>
    <source>
        <strain>Newman</strain>
    </source>
</reference>
<accession>A6QIU8</accession>
<proteinExistence type="inferred from homology"/>
<name>ATPG_STAAE</name>
<keyword id="KW-0066">ATP synthesis</keyword>
<keyword id="KW-1003">Cell membrane</keyword>
<keyword id="KW-0139">CF(1)</keyword>
<keyword id="KW-0375">Hydrogen ion transport</keyword>
<keyword id="KW-0406">Ion transport</keyword>
<keyword id="KW-0472">Membrane</keyword>
<keyword id="KW-0813">Transport</keyword>
<dbReference type="EMBL" id="AP009351">
    <property type="protein sequence ID" value="BAF68280.1"/>
    <property type="molecule type" value="Genomic_DNA"/>
</dbReference>
<dbReference type="RefSeq" id="WP_000157603.1">
    <property type="nucleotide sequence ID" value="NZ_JBBIAE010000008.1"/>
</dbReference>
<dbReference type="SMR" id="A6QIU8"/>
<dbReference type="GeneID" id="98346411"/>
<dbReference type="KEGG" id="sae:NWMN_2008"/>
<dbReference type="HOGENOM" id="CLU_050669_0_1_9"/>
<dbReference type="Proteomes" id="UP000006386">
    <property type="component" value="Chromosome"/>
</dbReference>
<dbReference type="GO" id="GO:0005886">
    <property type="term" value="C:plasma membrane"/>
    <property type="evidence" value="ECO:0007669"/>
    <property type="project" value="UniProtKB-SubCell"/>
</dbReference>
<dbReference type="GO" id="GO:0045259">
    <property type="term" value="C:proton-transporting ATP synthase complex"/>
    <property type="evidence" value="ECO:0007669"/>
    <property type="project" value="UniProtKB-KW"/>
</dbReference>
<dbReference type="GO" id="GO:0005524">
    <property type="term" value="F:ATP binding"/>
    <property type="evidence" value="ECO:0007669"/>
    <property type="project" value="UniProtKB-UniRule"/>
</dbReference>
<dbReference type="GO" id="GO:0046933">
    <property type="term" value="F:proton-transporting ATP synthase activity, rotational mechanism"/>
    <property type="evidence" value="ECO:0007669"/>
    <property type="project" value="UniProtKB-UniRule"/>
</dbReference>
<dbReference type="GO" id="GO:0042777">
    <property type="term" value="P:proton motive force-driven plasma membrane ATP synthesis"/>
    <property type="evidence" value="ECO:0007669"/>
    <property type="project" value="UniProtKB-UniRule"/>
</dbReference>
<dbReference type="CDD" id="cd12151">
    <property type="entry name" value="F1-ATPase_gamma"/>
    <property type="match status" value="1"/>
</dbReference>
<dbReference type="FunFam" id="1.10.287.80:FF:000019">
    <property type="entry name" value="ATP synthase gamma chain"/>
    <property type="match status" value="1"/>
</dbReference>
<dbReference type="FunFam" id="3.40.1380.10:FF:000002">
    <property type="entry name" value="ATP synthase gamma chain"/>
    <property type="match status" value="1"/>
</dbReference>
<dbReference type="Gene3D" id="3.40.1380.10">
    <property type="match status" value="1"/>
</dbReference>
<dbReference type="Gene3D" id="1.10.287.80">
    <property type="entry name" value="ATP synthase, gamma subunit, helix hairpin domain"/>
    <property type="match status" value="1"/>
</dbReference>
<dbReference type="HAMAP" id="MF_00815">
    <property type="entry name" value="ATP_synth_gamma_bact"/>
    <property type="match status" value="1"/>
</dbReference>
<dbReference type="InterPro" id="IPR035968">
    <property type="entry name" value="ATP_synth_F1_ATPase_gsu"/>
</dbReference>
<dbReference type="InterPro" id="IPR000131">
    <property type="entry name" value="ATP_synth_F1_gsu"/>
</dbReference>
<dbReference type="NCBIfam" id="TIGR01146">
    <property type="entry name" value="ATPsyn_F1gamma"/>
    <property type="match status" value="1"/>
</dbReference>
<dbReference type="PANTHER" id="PTHR11693">
    <property type="entry name" value="ATP SYNTHASE GAMMA CHAIN"/>
    <property type="match status" value="1"/>
</dbReference>
<dbReference type="PANTHER" id="PTHR11693:SF22">
    <property type="entry name" value="ATP SYNTHASE SUBUNIT GAMMA, MITOCHONDRIAL"/>
    <property type="match status" value="1"/>
</dbReference>
<dbReference type="Pfam" id="PF00231">
    <property type="entry name" value="ATP-synt"/>
    <property type="match status" value="1"/>
</dbReference>
<dbReference type="PRINTS" id="PR00126">
    <property type="entry name" value="ATPASEGAMMA"/>
</dbReference>
<dbReference type="SUPFAM" id="SSF52943">
    <property type="entry name" value="ATP synthase (F1-ATPase), gamma subunit"/>
    <property type="match status" value="1"/>
</dbReference>
<organism>
    <name type="scientific">Staphylococcus aureus (strain Newman)</name>
    <dbReference type="NCBI Taxonomy" id="426430"/>
    <lineage>
        <taxon>Bacteria</taxon>
        <taxon>Bacillati</taxon>
        <taxon>Bacillota</taxon>
        <taxon>Bacilli</taxon>
        <taxon>Bacillales</taxon>
        <taxon>Staphylococcaceae</taxon>
        <taxon>Staphylococcus</taxon>
    </lineage>
</organism>
<sequence length="288" mass="32106">MASLKEIDTRIKSTKKMKQITKAMNMVSSSKLRRAEKNTKQFTPYMDKMQDAITAVAGASSNTNHPMLRPRKITRSGYLVITSDKGLAGAYSANVLKKLITDIEAKHQDSSEYSIVVLGQQGVDFLKNRGYDIEYSQVDVPDQPSFKSVQALANHAIDLYSEEEIDELNIYYSHYVSVLENKPTSRQVLPLSQEDSSKGHGHLSSYEFEPDKESILSVILPQYVESLIYGTILDAKASEHATRMTAMKNATDNATELIDDLSLEYNRARQAEITQQITEIVGGSAALE</sequence>
<protein>
    <recommendedName>
        <fullName evidence="1">ATP synthase gamma chain</fullName>
    </recommendedName>
    <alternativeName>
        <fullName evidence="1">ATP synthase F1 sector gamma subunit</fullName>
    </alternativeName>
    <alternativeName>
        <fullName evidence="1">F-ATPase gamma subunit</fullName>
    </alternativeName>
</protein>
<comment type="function">
    <text evidence="1">Produces ATP from ADP in the presence of a proton gradient across the membrane. The gamma chain is believed to be important in regulating ATPase activity and the flow of protons through the CF(0) complex.</text>
</comment>
<comment type="subunit">
    <text evidence="1">F-type ATPases have 2 components, CF(1) - the catalytic core - and CF(0) - the membrane proton channel. CF(1) has five subunits: alpha(3), beta(3), gamma(1), delta(1), epsilon(1). CF(0) has three main subunits: a, b and c.</text>
</comment>
<comment type="subcellular location">
    <subcellularLocation>
        <location evidence="1">Cell membrane</location>
        <topology evidence="1">Peripheral membrane protein</topology>
    </subcellularLocation>
</comment>
<comment type="similarity">
    <text evidence="1">Belongs to the ATPase gamma chain family.</text>
</comment>
<evidence type="ECO:0000255" key="1">
    <source>
        <dbReference type="HAMAP-Rule" id="MF_00815"/>
    </source>
</evidence>
<gene>
    <name evidence="1" type="primary">atpG</name>
    <name type="ordered locus">NWMN_2008</name>
</gene>